<gene>
    <name type="primary">Jtb</name>
</gene>
<evidence type="ECO:0000250" key="1"/>
<evidence type="ECO:0000255" key="2"/>
<evidence type="ECO:0000305" key="3"/>
<feature type="signal peptide" evidence="2">
    <location>
        <begin position="1"/>
        <end position="30"/>
    </location>
</feature>
<feature type="chain" id="PRO_0000021537" description="Protein JTB">
    <location>
        <begin position="31"/>
        <end position="146"/>
    </location>
</feature>
<feature type="topological domain" description="Extracellular" evidence="2">
    <location>
        <begin position="31"/>
        <end position="105"/>
    </location>
</feature>
<feature type="transmembrane region" description="Helical" evidence="2">
    <location>
        <begin position="106"/>
        <end position="126"/>
    </location>
</feature>
<feature type="topological domain" description="Cytoplasmic" evidence="2">
    <location>
        <begin position="127"/>
        <end position="146"/>
    </location>
</feature>
<protein>
    <recommendedName>
        <fullName>Protein JTB</fullName>
    </recommendedName>
</protein>
<organism>
    <name type="scientific">Rattus norvegicus</name>
    <name type="common">Rat</name>
    <dbReference type="NCBI Taxonomy" id="10116"/>
    <lineage>
        <taxon>Eukaryota</taxon>
        <taxon>Metazoa</taxon>
        <taxon>Chordata</taxon>
        <taxon>Craniata</taxon>
        <taxon>Vertebrata</taxon>
        <taxon>Euteleostomi</taxon>
        <taxon>Mammalia</taxon>
        <taxon>Eutheria</taxon>
        <taxon>Euarchontoglires</taxon>
        <taxon>Glires</taxon>
        <taxon>Rodentia</taxon>
        <taxon>Myomorpha</taxon>
        <taxon>Muroidea</taxon>
        <taxon>Muridae</taxon>
        <taxon>Murinae</taxon>
        <taxon>Rattus</taxon>
    </lineage>
</organism>
<dbReference type="EMBL" id="AB016489">
    <property type="protein sequence ID" value="BAA33732.1"/>
    <property type="molecule type" value="mRNA"/>
</dbReference>
<dbReference type="EMBL" id="BC062090">
    <property type="protein sequence ID" value="AAH62090.1"/>
    <property type="molecule type" value="mRNA"/>
</dbReference>
<dbReference type="RefSeq" id="NP_062086.1">
    <property type="nucleotide sequence ID" value="NM_019213.2"/>
</dbReference>
<dbReference type="SMR" id="O88823"/>
<dbReference type="FunCoup" id="O88823">
    <property type="interactions" value="1164"/>
</dbReference>
<dbReference type="STRING" id="10116.ENSRNOP00000060227"/>
<dbReference type="PhosphoSitePlus" id="O88823"/>
<dbReference type="PaxDb" id="10116-ENSRNOP00000060227"/>
<dbReference type="Ensembl" id="ENSRNOT00000064752.3">
    <property type="protein sequence ID" value="ENSRNOP00000060227.1"/>
    <property type="gene ID" value="ENSRNOG00000016379.8"/>
</dbReference>
<dbReference type="GeneID" id="29439"/>
<dbReference type="KEGG" id="rno:29439"/>
<dbReference type="AGR" id="RGD:2942"/>
<dbReference type="CTD" id="10899"/>
<dbReference type="RGD" id="2942">
    <property type="gene designation" value="Jtb"/>
</dbReference>
<dbReference type="eggNOG" id="KOG4084">
    <property type="taxonomic scope" value="Eukaryota"/>
</dbReference>
<dbReference type="GeneTree" id="ENSGT00390000016136"/>
<dbReference type="HOGENOM" id="CLU_130083_1_0_1"/>
<dbReference type="InParanoid" id="O88823"/>
<dbReference type="OrthoDB" id="45267at9989"/>
<dbReference type="PhylomeDB" id="O88823"/>
<dbReference type="TreeFam" id="TF316934"/>
<dbReference type="PRO" id="PR:O88823"/>
<dbReference type="Proteomes" id="UP000002494">
    <property type="component" value="Chromosome 2"/>
</dbReference>
<dbReference type="Bgee" id="ENSRNOG00000016379">
    <property type="expression patterns" value="Expressed in quadriceps femoris and 20 other cell types or tissues"/>
</dbReference>
<dbReference type="GO" id="GO:0005813">
    <property type="term" value="C:centrosome"/>
    <property type="evidence" value="ECO:0000266"/>
    <property type="project" value="RGD"/>
</dbReference>
<dbReference type="GO" id="GO:0005737">
    <property type="term" value="C:cytoplasm"/>
    <property type="evidence" value="ECO:0000250"/>
    <property type="project" value="UniProtKB"/>
</dbReference>
<dbReference type="GO" id="GO:0016020">
    <property type="term" value="C:membrane"/>
    <property type="evidence" value="ECO:0007669"/>
    <property type="project" value="UniProtKB-SubCell"/>
</dbReference>
<dbReference type="GO" id="GO:0030496">
    <property type="term" value="C:midbody"/>
    <property type="evidence" value="ECO:0000250"/>
    <property type="project" value="UniProtKB"/>
</dbReference>
<dbReference type="GO" id="GO:0005739">
    <property type="term" value="C:mitochondrion"/>
    <property type="evidence" value="ECO:0000266"/>
    <property type="project" value="RGD"/>
</dbReference>
<dbReference type="GO" id="GO:0005819">
    <property type="term" value="C:spindle"/>
    <property type="evidence" value="ECO:0000266"/>
    <property type="project" value="RGD"/>
</dbReference>
<dbReference type="GO" id="GO:0019901">
    <property type="term" value="F:protein kinase binding"/>
    <property type="evidence" value="ECO:0000250"/>
    <property type="project" value="UniProtKB"/>
</dbReference>
<dbReference type="GO" id="GO:0008637">
    <property type="term" value="P:apoptotic mitochondrial changes"/>
    <property type="evidence" value="ECO:0000266"/>
    <property type="project" value="RGD"/>
</dbReference>
<dbReference type="GO" id="GO:0000278">
    <property type="term" value="P:mitotic cell cycle"/>
    <property type="evidence" value="ECO:0000250"/>
    <property type="project" value="UniProtKB"/>
</dbReference>
<dbReference type="GO" id="GO:0000281">
    <property type="term" value="P:mitotic cytokinesis"/>
    <property type="evidence" value="ECO:0000250"/>
    <property type="project" value="UniProtKB"/>
</dbReference>
<dbReference type="GO" id="GO:0045860">
    <property type="term" value="P:positive regulation of protein kinase activity"/>
    <property type="evidence" value="ECO:0000250"/>
    <property type="project" value="UniProtKB"/>
</dbReference>
<dbReference type="GO" id="GO:0042127">
    <property type="term" value="P:regulation of cell population proliferation"/>
    <property type="evidence" value="ECO:0000266"/>
    <property type="project" value="RGD"/>
</dbReference>
<dbReference type="FunFam" id="3.30.720.220:FF:000001">
    <property type="entry name" value="Jumping translocation breakpoint"/>
    <property type="match status" value="1"/>
</dbReference>
<dbReference type="Gene3D" id="3.30.720.220">
    <property type="match status" value="1"/>
</dbReference>
<dbReference type="InterPro" id="IPR008657">
    <property type="entry name" value="JTB"/>
</dbReference>
<dbReference type="PANTHER" id="PTHR13041">
    <property type="entry name" value="JTB PROTEIN-RELATED"/>
    <property type="match status" value="1"/>
</dbReference>
<dbReference type="PANTHER" id="PTHR13041:SF3">
    <property type="entry name" value="PROTEIN JTB"/>
    <property type="match status" value="1"/>
</dbReference>
<dbReference type="Pfam" id="PF05439">
    <property type="entry name" value="JTB"/>
    <property type="match status" value="1"/>
</dbReference>
<keyword id="KW-0053">Apoptosis</keyword>
<keyword id="KW-0131">Cell cycle</keyword>
<keyword id="KW-0132">Cell division</keyword>
<keyword id="KW-0963">Cytoplasm</keyword>
<keyword id="KW-0206">Cytoskeleton</keyword>
<keyword id="KW-0472">Membrane</keyword>
<keyword id="KW-0496">Mitochondrion</keyword>
<keyword id="KW-0498">Mitosis</keyword>
<keyword id="KW-1185">Reference proteome</keyword>
<keyword id="KW-0732">Signal</keyword>
<keyword id="KW-0812">Transmembrane</keyword>
<keyword id="KW-1133">Transmembrane helix</keyword>
<sequence>MLVGAGRRGLPRGGHLCWLLCAFTLKLCEAEAPVREEKLSVSTSTSPCWLVEEFVVTEECTPCSNFQIKTTPECGSTGYVEKITCSSSKRNEFKSCRSALLEQHLFWKFEGIVVGVALVFACLVIIRQRQLDRKALEKVRKQIESI</sequence>
<proteinExistence type="evidence at transcript level"/>
<name>JTB_RAT</name>
<accession>O88823</accession>
<comment type="function">
    <text evidence="1">Required for normal cytokinesis during mitosis. Plays a role in the regulation of cell proliferation. May be a component of the chromosomal passenger complex (CPC), a complex that acts as a key regulator of mitosis. The CPC complex has essential functions at the centromere in ensuring correct chromosome alignment and segregation and is required for chromatin-induced microtubule stabilization and spindle assembly. Increases AURKB activity. Inhibits apoptosis induced by TGFB1. Overexpression induces swelling of mitochondria and reduces mitochondrial membrane potential (By similarity).</text>
</comment>
<comment type="subunit">
    <text evidence="1">Interacts with AURKA, AURKB, BIRC5 and INCENP. May be a component of the CPC at least composed of BIRC5/survivin, CDCA8/borealin, INCENP and AURKB/Aurora-B (By similarity).</text>
</comment>
<comment type="subcellular location">
    <subcellularLocation>
        <location evidence="3">Membrane</location>
        <topology evidence="3">Single-pass type I membrane protein</topology>
    </subcellularLocation>
    <subcellularLocation>
        <location evidence="1">Mitochondrion</location>
    </subcellularLocation>
    <subcellularLocation>
        <location evidence="1">Cytoplasm</location>
    </subcellularLocation>
    <subcellularLocation>
        <location evidence="1">Cytoplasm</location>
        <location evidence="1">Cytoskeleton</location>
        <location evidence="1">Microtubule organizing center</location>
        <location evidence="1">Centrosome</location>
    </subcellularLocation>
    <subcellularLocation>
        <location evidence="1">Cytoplasm</location>
        <location evidence="1">Cytoskeleton</location>
        <location evidence="1">Spindle</location>
    </subcellularLocation>
    <text evidence="1">Detected at the centrosome and along spindle fibers during prophase and metaphase. Detected at the midbody during telophase (By similarity).</text>
</comment>
<comment type="similarity">
    <text evidence="3">Belongs to the JTB family.</text>
</comment>
<reference key="1">
    <citation type="journal article" date="1999" name="Oncogene">
        <title>JTB: a novel membrane protein gene at 1q21 rearranged in a jumping translocation.</title>
        <authorList>
            <person name="Hatakeyama S."/>
            <person name="Osawa M."/>
            <person name="Omine M."/>
            <person name="Ishikawa F."/>
        </authorList>
    </citation>
    <scope>NUCLEOTIDE SEQUENCE [MRNA]</scope>
</reference>
<reference key="2">
    <citation type="journal article" date="2004" name="Genome Res.">
        <title>The status, quality, and expansion of the NIH full-length cDNA project: the Mammalian Gene Collection (MGC).</title>
        <authorList>
            <consortium name="The MGC Project Team"/>
        </authorList>
    </citation>
    <scope>NUCLEOTIDE SEQUENCE [LARGE SCALE MRNA]</scope>
    <source>
        <tissue>Prostate</tissue>
    </source>
</reference>